<protein>
    <recommendedName>
        <fullName evidence="1">Glycogen synthase</fullName>
        <ecNumber evidence="1">2.4.1.21</ecNumber>
    </recommendedName>
    <alternativeName>
        <fullName evidence="1">Starch [bacterial glycogen] synthase</fullName>
    </alternativeName>
</protein>
<proteinExistence type="inferred from homology"/>
<name>GLGA_SYNP6</name>
<organism>
    <name type="scientific">Synechococcus sp. (strain ATCC 27144 / PCC 6301 / SAUG 1402/1)</name>
    <name type="common">Anacystis nidulans</name>
    <dbReference type="NCBI Taxonomy" id="269084"/>
    <lineage>
        <taxon>Bacteria</taxon>
        <taxon>Bacillati</taxon>
        <taxon>Cyanobacteriota</taxon>
        <taxon>Cyanophyceae</taxon>
        <taxon>Synechococcales</taxon>
        <taxon>Synechococcaceae</taxon>
        <taxon>Synechococcus</taxon>
    </lineage>
</organism>
<accession>Q5N1P1</accession>
<dbReference type="EC" id="2.4.1.21" evidence="1"/>
<dbReference type="EMBL" id="AP008231">
    <property type="protein sequence ID" value="BAD79779.1"/>
    <property type="molecule type" value="Genomic_DNA"/>
</dbReference>
<dbReference type="RefSeq" id="WP_011243899.1">
    <property type="nucleotide sequence ID" value="NC_006576.1"/>
</dbReference>
<dbReference type="SMR" id="Q5N1P1"/>
<dbReference type="CAZy" id="GT5">
    <property type="family name" value="Glycosyltransferase Family 5"/>
</dbReference>
<dbReference type="KEGG" id="syc:syc1589_d"/>
<dbReference type="eggNOG" id="COG0297">
    <property type="taxonomic scope" value="Bacteria"/>
</dbReference>
<dbReference type="UniPathway" id="UPA00164"/>
<dbReference type="Proteomes" id="UP000001175">
    <property type="component" value="Chromosome"/>
</dbReference>
<dbReference type="GO" id="GO:0009011">
    <property type="term" value="F:alpha-1,4-glucan glucosyltransferase (ADP-glucose donor) activity"/>
    <property type="evidence" value="ECO:0007669"/>
    <property type="project" value="UniProtKB-UniRule"/>
</dbReference>
<dbReference type="GO" id="GO:0004373">
    <property type="term" value="F:alpha-1,4-glucan glucosyltransferase (UDP-glucose donor) activity"/>
    <property type="evidence" value="ECO:0007669"/>
    <property type="project" value="InterPro"/>
</dbReference>
<dbReference type="GO" id="GO:0005978">
    <property type="term" value="P:glycogen biosynthetic process"/>
    <property type="evidence" value="ECO:0007669"/>
    <property type="project" value="UniProtKB-UniRule"/>
</dbReference>
<dbReference type="CDD" id="cd03791">
    <property type="entry name" value="GT5_Glycogen_synthase_DULL1-like"/>
    <property type="match status" value="1"/>
</dbReference>
<dbReference type="Gene3D" id="3.40.50.2000">
    <property type="entry name" value="Glycogen Phosphorylase B"/>
    <property type="match status" value="2"/>
</dbReference>
<dbReference type="HAMAP" id="MF_00484">
    <property type="entry name" value="Glycogen_synth"/>
    <property type="match status" value="1"/>
</dbReference>
<dbReference type="InterPro" id="IPR001296">
    <property type="entry name" value="Glyco_trans_1"/>
</dbReference>
<dbReference type="InterPro" id="IPR011835">
    <property type="entry name" value="GS/SS"/>
</dbReference>
<dbReference type="InterPro" id="IPR013534">
    <property type="entry name" value="Starch_synth_cat_dom"/>
</dbReference>
<dbReference type="NCBIfam" id="TIGR02095">
    <property type="entry name" value="glgA"/>
    <property type="match status" value="1"/>
</dbReference>
<dbReference type="NCBIfam" id="NF001900">
    <property type="entry name" value="PRK00654.1-3"/>
    <property type="match status" value="1"/>
</dbReference>
<dbReference type="PANTHER" id="PTHR45825:SF11">
    <property type="entry name" value="ALPHA AMYLASE DOMAIN-CONTAINING PROTEIN"/>
    <property type="match status" value="1"/>
</dbReference>
<dbReference type="PANTHER" id="PTHR45825">
    <property type="entry name" value="GRANULE-BOUND STARCH SYNTHASE 1, CHLOROPLASTIC/AMYLOPLASTIC"/>
    <property type="match status" value="1"/>
</dbReference>
<dbReference type="Pfam" id="PF08323">
    <property type="entry name" value="Glyco_transf_5"/>
    <property type="match status" value="1"/>
</dbReference>
<dbReference type="Pfam" id="PF00534">
    <property type="entry name" value="Glycos_transf_1"/>
    <property type="match status" value="1"/>
</dbReference>
<dbReference type="SUPFAM" id="SSF53756">
    <property type="entry name" value="UDP-Glycosyltransferase/glycogen phosphorylase"/>
    <property type="match status" value="1"/>
</dbReference>
<gene>
    <name evidence="1" type="primary">glgA</name>
    <name type="ordered locus">syc1589_d</name>
</gene>
<reference key="1">
    <citation type="journal article" date="2007" name="Photosyn. Res.">
        <title>Complete nucleotide sequence of the freshwater unicellular cyanobacterium Synechococcus elongatus PCC 6301 chromosome: gene content and organization.</title>
        <authorList>
            <person name="Sugita C."/>
            <person name="Ogata K."/>
            <person name="Shikata M."/>
            <person name="Jikuya H."/>
            <person name="Takano J."/>
            <person name="Furumichi M."/>
            <person name="Kanehisa M."/>
            <person name="Omata T."/>
            <person name="Sugiura M."/>
            <person name="Sugita M."/>
        </authorList>
    </citation>
    <scope>NUCLEOTIDE SEQUENCE [LARGE SCALE GENOMIC DNA]</scope>
    <source>
        <strain>ATCC 27144 / PCC 6301 / SAUG 1402/1</strain>
    </source>
</reference>
<sequence>MRILFVAAECAPFAKVGGMGDVVGSLPKVLKALGHDVRIFMPYYGFLNSKLDIPAEPIWWGYAMFNHFAVYETQLPGSDVPLYLMGHPAFDPHRIYSGEDEDWRFTFFANGAAEFSWNYWKPQVIHCHDWHTGMIPVWMHQSPDISTVFTIHNLAYQGPWRWKLEKITWCPWYMQGDSTMAAALLYADRVNTVSPTYAQQIQTPTYGEKLEGLLSFISGKLSGILNGIDVDSYNPATDTRIVANCDRDTLDKRLNNKLALQKEMGLEVNPDRFLIGFVARLVEQKGIDLLLQILDRFLSYSDAQFVVLGTGERYYETQLWELATRYPGRMSTYLMYDEGLSRRIYAGSDAFLVPSRFEPCGITQMLALRYGSVPIVRRTGGLVDTVFHHDPRHAEGNGYCFDRYEPLDLYTCLVRAWESYQYQPQWQKLQQRGMAVDLSWKQSAIAYEQLYAEAIGLPIDVLQEA</sequence>
<comment type="function">
    <text evidence="1">Synthesizes alpha-1,4-glucan chains using ADP-glucose.</text>
</comment>
<comment type="catalytic activity">
    <reaction evidence="1">
        <text>[(1-&gt;4)-alpha-D-glucosyl](n) + ADP-alpha-D-glucose = [(1-&gt;4)-alpha-D-glucosyl](n+1) + ADP + H(+)</text>
        <dbReference type="Rhea" id="RHEA:18189"/>
        <dbReference type="Rhea" id="RHEA-COMP:9584"/>
        <dbReference type="Rhea" id="RHEA-COMP:9587"/>
        <dbReference type="ChEBI" id="CHEBI:15378"/>
        <dbReference type="ChEBI" id="CHEBI:15444"/>
        <dbReference type="ChEBI" id="CHEBI:57498"/>
        <dbReference type="ChEBI" id="CHEBI:456216"/>
        <dbReference type="EC" id="2.4.1.21"/>
    </reaction>
</comment>
<comment type="pathway">
    <text evidence="1">Glycan biosynthesis; glycogen biosynthesis.</text>
</comment>
<comment type="similarity">
    <text evidence="1">Belongs to the glycosyltransferase 1 family. Bacterial/plant glycogen synthase subfamily.</text>
</comment>
<evidence type="ECO:0000255" key="1">
    <source>
        <dbReference type="HAMAP-Rule" id="MF_00484"/>
    </source>
</evidence>
<keyword id="KW-0320">Glycogen biosynthesis</keyword>
<keyword id="KW-0328">Glycosyltransferase</keyword>
<keyword id="KW-0808">Transferase</keyword>
<feature type="chain" id="PRO_0000188652" description="Glycogen synthase">
    <location>
        <begin position="1"/>
        <end position="465"/>
    </location>
</feature>
<feature type="binding site" evidence="1">
    <location>
        <position position="15"/>
    </location>
    <ligand>
        <name>ADP-alpha-D-glucose</name>
        <dbReference type="ChEBI" id="CHEBI:57498"/>
    </ligand>
</feature>